<organism>
    <name type="scientific">Lacticaseibacillus paracasei (strain ATCC 334 / BCRC 17002 / CCUG 31169 / CIP 107868 / KCTC 3260 / NRRL B-441)</name>
    <name type="common">Lactobacillus paracasei</name>
    <dbReference type="NCBI Taxonomy" id="321967"/>
    <lineage>
        <taxon>Bacteria</taxon>
        <taxon>Bacillati</taxon>
        <taxon>Bacillota</taxon>
        <taxon>Bacilli</taxon>
        <taxon>Lactobacillales</taxon>
        <taxon>Lactobacillaceae</taxon>
        <taxon>Lacticaseibacillus</taxon>
    </lineage>
</organism>
<name>DAPEL_LACP3</name>
<proteinExistence type="inferred from homology"/>
<feature type="chain" id="PRO_0000376758" description="N-acetyldiaminopimelate deacetylase">
    <location>
        <begin position="1"/>
        <end position="383"/>
    </location>
</feature>
<feature type="active site" evidence="1">
    <location>
        <position position="72"/>
    </location>
</feature>
<feature type="active site" description="Proton acceptor" evidence="1">
    <location>
        <position position="131"/>
    </location>
</feature>
<reference key="1">
    <citation type="journal article" date="2006" name="Proc. Natl. Acad. Sci. U.S.A.">
        <title>Comparative genomics of the lactic acid bacteria.</title>
        <authorList>
            <person name="Makarova K.S."/>
            <person name="Slesarev A."/>
            <person name="Wolf Y.I."/>
            <person name="Sorokin A."/>
            <person name="Mirkin B."/>
            <person name="Koonin E.V."/>
            <person name="Pavlov A."/>
            <person name="Pavlova N."/>
            <person name="Karamychev V."/>
            <person name="Polouchine N."/>
            <person name="Shakhova V."/>
            <person name="Grigoriev I."/>
            <person name="Lou Y."/>
            <person name="Rohksar D."/>
            <person name="Lucas S."/>
            <person name="Huang K."/>
            <person name="Goodstein D.M."/>
            <person name="Hawkins T."/>
            <person name="Plengvidhya V."/>
            <person name="Welker D."/>
            <person name="Hughes J."/>
            <person name="Goh Y."/>
            <person name="Benson A."/>
            <person name="Baldwin K."/>
            <person name="Lee J.-H."/>
            <person name="Diaz-Muniz I."/>
            <person name="Dosti B."/>
            <person name="Smeianov V."/>
            <person name="Wechter W."/>
            <person name="Barabote R."/>
            <person name="Lorca G."/>
            <person name="Altermann E."/>
            <person name="Barrangou R."/>
            <person name="Ganesan B."/>
            <person name="Xie Y."/>
            <person name="Rawsthorne H."/>
            <person name="Tamir D."/>
            <person name="Parker C."/>
            <person name="Breidt F."/>
            <person name="Broadbent J.R."/>
            <person name="Hutkins R."/>
            <person name="O'Sullivan D."/>
            <person name="Steele J."/>
            <person name="Unlu G."/>
            <person name="Saier M.H. Jr."/>
            <person name="Klaenhammer T."/>
            <person name="Richardson P."/>
            <person name="Kozyavkin S."/>
            <person name="Weimer B.C."/>
            <person name="Mills D.A."/>
        </authorList>
    </citation>
    <scope>NUCLEOTIDE SEQUENCE [LARGE SCALE GENOMIC DNA]</scope>
    <source>
        <strain>ATCC 334 / BCRC 17002 / CCUG 31169 / CIP 107868 / KCTC 3260 / NRRL B-441</strain>
    </source>
</reference>
<protein>
    <recommendedName>
        <fullName evidence="1">N-acetyldiaminopimelate deacetylase</fullName>
        <ecNumber evidence="1">3.5.1.47</ecNumber>
    </recommendedName>
</protein>
<comment type="function">
    <text evidence="1">Catalyzes the conversion of N-acetyl-diaminopimelate to diaminopimelate and acetate.</text>
</comment>
<comment type="catalytic activity">
    <reaction evidence="1">
        <text>N-acetyl-(2S,6S)-2,6-diaminopimelate + H2O = (2S,6S)-2,6-diaminopimelate + acetate</text>
        <dbReference type="Rhea" id="RHEA:20405"/>
        <dbReference type="ChEBI" id="CHEBI:15377"/>
        <dbReference type="ChEBI" id="CHEBI:30089"/>
        <dbReference type="ChEBI" id="CHEBI:57609"/>
        <dbReference type="ChEBI" id="CHEBI:58767"/>
        <dbReference type="EC" id="3.5.1.47"/>
    </reaction>
</comment>
<comment type="pathway">
    <text evidence="1">Amino-acid biosynthesis; L-lysine biosynthesis via DAP pathway; LL-2,6-diaminopimelate from (S)-tetrahydrodipicolinate (acetylase route): step 3/3.</text>
</comment>
<comment type="similarity">
    <text evidence="1">Belongs to the peptidase M20A family. N-acetyldiaminopimelate deacetylase subfamily.</text>
</comment>
<accession>Q03CW2</accession>
<sequence length="383" mass="42098">MKEADLITLRRQLHQIPELALQEKETHALLLKTIQGLPQTYFTIRTLPDLPTALLVKVQGRDPQRTIGYRTDIDALPVTEKTGLPFASKHSGIAHACGHDIHMTVALGILSYFAEHQPKDNLIFFFQPAEESKNGGKLAYDMGAFTGDWHIDEFYGLHDRPDLPAGTISTRLGTLFAGTTEINVDLIGKSGHAALPQNANDMIVAAASFISQIQTVVARNVGPTDSAVITFGLMRAGTIRNVIAGRAHLEGTLRGFTQQQIDFLQQRIRDIGQGIAASFNCQVKVALNQGGYYPVENNDKLTKNFIQVMKDDPDVTFVDTKPVMTGEDFGYLLNKIPGTMFWLGVNDPDSQLHAADFSPDEAALVPGVTAVVHFLEHRMLEKV</sequence>
<keyword id="KW-0028">Amino-acid biosynthesis</keyword>
<keyword id="KW-0220">Diaminopimelate biosynthesis</keyword>
<keyword id="KW-0378">Hydrolase</keyword>
<keyword id="KW-0457">Lysine biosynthesis</keyword>
<keyword id="KW-1185">Reference proteome</keyword>
<gene>
    <name type="ordered locus">LSEI_0096</name>
</gene>
<dbReference type="EC" id="3.5.1.47" evidence="1"/>
<dbReference type="EMBL" id="CP000423">
    <property type="protein sequence ID" value="ABJ68960.1"/>
    <property type="molecule type" value="Genomic_DNA"/>
</dbReference>
<dbReference type="RefSeq" id="WP_011673975.1">
    <property type="nucleotide sequence ID" value="NC_008526.1"/>
</dbReference>
<dbReference type="RefSeq" id="YP_805402.1">
    <property type="nucleotide sequence ID" value="NC_008526.1"/>
</dbReference>
<dbReference type="SMR" id="Q03CW2"/>
<dbReference type="STRING" id="321967.LSEI_0096"/>
<dbReference type="PaxDb" id="321967-LSEI_0096"/>
<dbReference type="KEGG" id="lca:LSEI_0096"/>
<dbReference type="PATRIC" id="fig|321967.11.peg.118"/>
<dbReference type="HOGENOM" id="CLU_023257_0_1_9"/>
<dbReference type="UniPathway" id="UPA00034">
    <property type="reaction ID" value="UER00024"/>
</dbReference>
<dbReference type="Proteomes" id="UP000001651">
    <property type="component" value="Chromosome"/>
</dbReference>
<dbReference type="GO" id="GO:0050118">
    <property type="term" value="F:N-acetyldiaminopimelate deacetylase activity"/>
    <property type="evidence" value="ECO:0007669"/>
    <property type="project" value="UniProtKB-UniRule"/>
</dbReference>
<dbReference type="GO" id="GO:0019877">
    <property type="term" value="P:diaminopimelate biosynthetic process"/>
    <property type="evidence" value="ECO:0007669"/>
    <property type="project" value="UniProtKB-UniRule"/>
</dbReference>
<dbReference type="GO" id="GO:0009089">
    <property type="term" value="P:lysine biosynthetic process via diaminopimelate"/>
    <property type="evidence" value="ECO:0007669"/>
    <property type="project" value="UniProtKB-UniRule"/>
</dbReference>
<dbReference type="CDD" id="cd05670">
    <property type="entry name" value="M20_Acy1_YkuR-like"/>
    <property type="match status" value="1"/>
</dbReference>
<dbReference type="FunFam" id="3.30.70.360:FF:000001">
    <property type="entry name" value="N-acetyldiaminopimelate deacetylase"/>
    <property type="match status" value="1"/>
</dbReference>
<dbReference type="Gene3D" id="3.30.70.360">
    <property type="match status" value="1"/>
</dbReference>
<dbReference type="Gene3D" id="3.40.630.10">
    <property type="entry name" value="Zn peptidases"/>
    <property type="match status" value="1"/>
</dbReference>
<dbReference type="HAMAP" id="MF_01692">
    <property type="entry name" value="DapEL"/>
    <property type="match status" value="1"/>
</dbReference>
<dbReference type="InterPro" id="IPR023905">
    <property type="entry name" value="AcetylDAP_deacetylase"/>
</dbReference>
<dbReference type="InterPro" id="IPR017439">
    <property type="entry name" value="Amidohydrolase"/>
</dbReference>
<dbReference type="InterPro" id="IPR036264">
    <property type="entry name" value="Bact_exopeptidase_dim_dom"/>
</dbReference>
<dbReference type="InterPro" id="IPR002933">
    <property type="entry name" value="Peptidase_M20"/>
</dbReference>
<dbReference type="InterPro" id="IPR011650">
    <property type="entry name" value="Peptidase_M20_dimer"/>
</dbReference>
<dbReference type="NCBIfam" id="TIGR01891">
    <property type="entry name" value="amidohydrolases"/>
    <property type="match status" value="1"/>
</dbReference>
<dbReference type="PANTHER" id="PTHR11014:SF98">
    <property type="entry name" value="N-ACETYLDIAMINOPIMELATE DEACETYLASE"/>
    <property type="match status" value="1"/>
</dbReference>
<dbReference type="PANTHER" id="PTHR11014">
    <property type="entry name" value="PEPTIDASE M20 FAMILY MEMBER"/>
    <property type="match status" value="1"/>
</dbReference>
<dbReference type="Pfam" id="PF07687">
    <property type="entry name" value="M20_dimer"/>
    <property type="match status" value="1"/>
</dbReference>
<dbReference type="Pfam" id="PF01546">
    <property type="entry name" value="Peptidase_M20"/>
    <property type="match status" value="1"/>
</dbReference>
<dbReference type="PIRSF" id="PIRSF005962">
    <property type="entry name" value="Pept_M20D_amidohydro"/>
    <property type="match status" value="1"/>
</dbReference>
<dbReference type="SUPFAM" id="SSF55031">
    <property type="entry name" value="Bacterial exopeptidase dimerisation domain"/>
    <property type="match status" value="1"/>
</dbReference>
<dbReference type="SUPFAM" id="SSF53187">
    <property type="entry name" value="Zn-dependent exopeptidases"/>
    <property type="match status" value="1"/>
</dbReference>
<evidence type="ECO:0000255" key="1">
    <source>
        <dbReference type="HAMAP-Rule" id="MF_01692"/>
    </source>
</evidence>